<sequence length="154" mass="17612">MEINWSWQRFNDISGEAMHEMLALRQEVFVVEQGCLYLDADGLDKQSWHLFGRTNDQQLVAYARLNFPNTRYPEPSFGRVLTSKAIRGMGAGRKIVAACIQKSLREYPNLDLQISAQAHLTEFYAEFGFTKVGDPYDDHGIEHISMIFRVPPNG</sequence>
<proteinExistence type="inferred from homology"/>
<accession>P74676</accession>
<protein>
    <recommendedName>
        <fullName>UPF0039 protein sll0451</fullName>
    </recommendedName>
</protein>
<comment type="similarity">
    <text evidence="2">Belongs to the UPF0039 (ElaA) family.</text>
</comment>
<keyword id="KW-1185">Reference proteome</keyword>
<evidence type="ECO:0000255" key="1">
    <source>
        <dbReference type="PROSITE-ProRule" id="PRU00532"/>
    </source>
</evidence>
<evidence type="ECO:0000305" key="2"/>
<organism>
    <name type="scientific">Synechocystis sp. (strain ATCC 27184 / PCC 6803 / Kazusa)</name>
    <dbReference type="NCBI Taxonomy" id="1111708"/>
    <lineage>
        <taxon>Bacteria</taxon>
        <taxon>Bacillati</taxon>
        <taxon>Cyanobacteriota</taxon>
        <taxon>Cyanophyceae</taxon>
        <taxon>Synechococcales</taxon>
        <taxon>Merismopediaceae</taxon>
        <taxon>Synechocystis</taxon>
    </lineage>
</organism>
<name>Y451_SYNY3</name>
<gene>
    <name type="ordered locus">sll0451</name>
</gene>
<feature type="chain" id="PRO_0000201920" description="UPF0039 protein sll0451">
    <location>
        <begin position="1"/>
        <end position="154"/>
    </location>
</feature>
<feature type="domain" description="N-acetyltransferase" evidence="1">
    <location>
        <begin position="8"/>
        <end position="151"/>
    </location>
</feature>
<dbReference type="EMBL" id="BA000022">
    <property type="protein sequence ID" value="BAA18794.1"/>
    <property type="molecule type" value="Genomic_DNA"/>
</dbReference>
<dbReference type="PIR" id="S76882">
    <property type="entry name" value="S76882"/>
</dbReference>
<dbReference type="SMR" id="P74676"/>
<dbReference type="IntAct" id="P74676">
    <property type="interactions" value="1"/>
</dbReference>
<dbReference type="STRING" id="1148.gene:10500566"/>
<dbReference type="PaxDb" id="1148-1653884"/>
<dbReference type="EnsemblBacteria" id="BAA18794">
    <property type="protein sequence ID" value="BAA18794"/>
    <property type="gene ID" value="BAA18794"/>
</dbReference>
<dbReference type="KEGG" id="syn:sll0451"/>
<dbReference type="eggNOG" id="COG2153">
    <property type="taxonomic scope" value="Bacteria"/>
</dbReference>
<dbReference type="InParanoid" id="P74676"/>
<dbReference type="PhylomeDB" id="P74676"/>
<dbReference type="Proteomes" id="UP000001425">
    <property type="component" value="Chromosome"/>
</dbReference>
<dbReference type="GO" id="GO:0016747">
    <property type="term" value="F:acyltransferase activity, transferring groups other than amino-acyl groups"/>
    <property type="evidence" value="ECO:0000318"/>
    <property type="project" value="GO_Central"/>
</dbReference>
<dbReference type="CDD" id="cd04301">
    <property type="entry name" value="NAT_SF"/>
    <property type="match status" value="1"/>
</dbReference>
<dbReference type="Gene3D" id="3.40.630.30">
    <property type="match status" value="1"/>
</dbReference>
<dbReference type="InterPro" id="IPR016181">
    <property type="entry name" value="Acyl_CoA_acyltransferase"/>
</dbReference>
<dbReference type="InterPro" id="IPR000182">
    <property type="entry name" value="GNAT_dom"/>
</dbReference>
<dbReference type="Pfam" id="PF13673">
    <property type="entry name" value="Acetyltransf_10"/>
    <property type="match status" value="1"/>
</dbReference>
<dbReference type="SUPFAM" id="SSF55729">
    <property type="entry name" value="Acyl-CoA N-acyltransferases (Nat)"/>
    <property type="match status" value="1"/>
</dbReference>
<dbReference type="PROSITE" id="PS51186">
    <property type="entry name" value="GNAT"/>
    <property type="match status" value="1"/>
</dbReference>
<reference key="1">
    <citation type="journal article" date="1996" name="DNA Res.">
        <title>Sequence analysis of the genome of the unicellular cyanobacterium Synechocystis sp. strain PCC6803. II. Sequence determination of the entire genome and assignment of potential protein-coding regions.</title>
        <authorList>
            <person name="Kaneko T."/>
            <person name="Sato S."/>
            <person name="Kotani H."/>
            <person name="Tanaka A."/>
            <person name="Asamizu E."/>
            <person name="Nakamura Y."/>
            <person name="Miyajima N."/>
            <person name="Hirosawa M."/>
            <person name="Sugiura M."/>
            <person name="Sasamoto S."/>
            <person name="Kimura T."/>
            <person name="Hosouchi T."/>
            <person name="Matsuno A."/>
            <person name="Muraki A."/>
            <person name="Nakazaki N."/>
            <person name="Naruo K."/>
            <person name="Okumura S."/>
            <person name="Shimpo S."/>
            <person name="Takeuchi C."/>
            <person name="Wada T."/>
            <person name="Watanabe A."/>
            <person name="Yamada M."/>
            <person name="Yasuda M."/>
            <person name="Tabata S."/>
        </authorList>
    </citation>
    <scope>NUCLEOTIDE SEQUENCE [LARGE SCALE GENOMIC DNA]</scope>
    <source>
        <strain>ATCC 27184 / PCC 6803 / Kazusa</strain>
    </source>
</reference>